<gene>
    <name evidence="1" type="primary">CPNE1</name>
</gene>
<feature type="chain" id="PRO_0000434559" description="Copine-1">
    <location>
        <begin position="1"/>
        <end position="537"/>
    </location>
</feature>
<feature type="domain" description="C2 1" evidence="2">
    <location>
        <begin position="1"/>
        <end position="114"/>
    </location>
</feature>
<feature type="domain" description="C2 2" evidence="2">
    <location>
        <begin position="123"/>
        <end position="245"/>
    </location>
</feature>
<feature type="domain" description="VWFA" evidence="3">
    <location>
        <begin position="285"/>
        <end position="505"/>
    </location>
</feature>
<feature type="binding site" evidence="2">
    <location>
        <position position="21"/>
    </location>
    <ligand>
        <name>Ca(2+)</name>
        <dbReference type="ChEBI" id="CHEBI:29108"/>
        <label>1</label>
    </ligand>
</feature>
<feature type="binding site" evidence="2">
    <location>
        <position position="21"/>
    </location>
    <ligand>
        <name>Ca(2+)</name>
        <dbReference type="ChEBI" id="CHEBI:29108"/>
        <label>2</label>
    </ligand>
</feature>
<feature type="binding site" evidence="2">
    <location>
        <position position="27"/>
    </location>
    <ligand>
        <name>Ca(2+)</name>
        <dbReference type="ChEBI" id="CHEBI:29108"/>
        <label>1</label>
    </ligand>
</feature>
<feature type="binding site" evidence="2">
    <location>
        <position position="80"/>
    </location>
    <ligand>
        <name>Ca(2+)</name>
        <dbReference type="ChEBI" id="CHEBI:29108"/>
        <label>1</label>
    </ligand>
</feature>
<feature type="binding site" evidence="2">
    <location>
        <position position="80"/>
    </location>
    <ligand>
        <name>Ca(2+)</name>
        <dbReference type="ChEBI" id="CHEBI:29108"/>
        <label>2</label>
    </ligand>
</feature>
<feature type="binding site" evidence="2">
    <location>
        <position position="82"/>
    </location>
    <ligand>
        <name>Ca(2+)</name>
        <dbReference type="ChEBI" id="CHEBI:29108"/>
        <label>1</label>
    </ligand>
</feature>
<feature type="binding site" evidence="2">
    <location>
        <position position="82"/>
    </location>
    <ligand>
        <name>Ca(2+)</name>
        <dbReference type="ChEBI" id="CHEBI:29108"/>
        <label>2</label>
    </ligand>
</feature>
<feature type="binding site" evidence="2">
    <location>
        <position position="92"/>
    </location>
    <ligand>
        <name>Ca(2+)</name>
        <dbReference type="ChEBI" id="CHEBI:29108"/>
        <label>2</label>
    </ligand>
</feature>
<feature type="binding site" evidence="2">
    <location>
        <position position="153"/>
    </location>
    <ligand>
        <name>Ca(2+)</name>
        <dbReference type="ChEBI" id="CHEBI:29108"/>
        <label>3</label>
    </ligand>
</feature>
<feature type="binding site" evidence="2">
    <location>
        <position position="153"/>
    </location>
    <ligand>
        <name>Ca(2+)</name>
        <dbReference type="ChEBI" id="CHEBI:29108"/>
        <label>4</label>
    </ligand>
</feature>
<feature type="binding site" evidence="2">
    <location>
        <position position="159"/>
    </location>
    <ligand>
        <name>Ca(2+)</name>
        <dbReference type="ChEBI" id="CHEBI:29108"/>
        <label>3</label>
    </ligand>
</feature>
<feature type="binding site" evidence="2">
    <location>
        <position position="214"/>
    </location>
    <ligand>
        <name>Ca(2+)</name>
        <dbReference type="ChEBI" id="CHEBI:29108"/>
        <label>3</label>
    </ligand>
</feature>
<feature type="binding site" evidence="2">
    <location>
        <position position="214"/>
    </location>
    <ligand>
        <name>Ca(2+)</name>
        <dbReference type="ChEBI" id="CHEBI:29108"/>
        <label>4</label>
    </ligand>
</feature>
<feature type="binding site" evidence="2">
    <location>
        <position position="216"/>
    </location>
    <ligand>
        <name>Ca(2+)</name>
        <dbReference type="ChEBI" id="CHEBI:29108"/>
        <label>3</label>
    </ligand>
</feature>
<feature type="binding site" evidence="2">
    <location>
        <position position="216"/>
    </location>
    <ligand>
        <name>Ca(2+)</name>
        <dbReference type="ChEBI" id="CHEBI:29108"/>
        <label>4</label>
    </ligand>
</feature>
<feature type="binding site" evidence="2">
    <location>
        <position position="222"/>
    </location>
    <ligand>
        <name>Ca(2+)</name>
        <dbReference type="ChEBI" id="CHEBI:29108"/>
        <label>4</label>
    </ligand>
</feature>
<feature type="modified residue" description="N6-acetyllysine" evidence="1">
    <location>
        <position position="171"/>
    </location>
</feature>
<reference key="1">
    <citation type="journal article" date="2009" name="Genome Biol.">
        <title>A whole-genome assembly of the domestic cow, Bos taurus.</title>
        <authorList>
            <person name="Zimin A.V."/>
            <person name="Delcher A.L."/>
            <person name="Florea L."/>
            <person name="Kelley D.R."/>
            <person name="Schatz M.C."/>
            <person name="Puiu D."/>
            <person name="Hanrahan F."/>
            <person name="Pertea G."/>
            <person name="Van Tassell C.P."/>
            <person name="Sonstegard T.S."/>
            <person name="Marcais G."/>
            <person name="Roberts M."/>
            <person name="Subramanian P."/>
            <person name="Yorke J.A."/>
            <person name="Salzberg S.L."/>
        </authorList>
    </citation>
    <scope>NUCLEOTIDE SEQUENCE [LARGE SCALE GENOMIC DNA]</scope>
    <source>
        <strain>Hereford</strain>
    </source>
</reference>
<reference key="2">
    <citation type="submission" date="2006-09" db="EMBL/GenBank/DDBJ databases">
        <authorList>
            <consortium name="NIH - Mammalian Gene Collection (MGC) project"/>
        </authorList>
    </citation>
    <scope>NUCLEOTIDE SEQUENCE [LARGE SCALE MRNA]</scope>
    <source>
        <strain evidence="6">Hereford</strain>
        <tissue evidence="6">Fetal skin</tissue>
    </source>
</reference>
<reference key="3">
    <citation type="journal article" date="2000" name="Biochemistry">
        <title>Biochemical characterization of copine: a ubiquitous Ca2+-dependent, phospholipid-binding protein.</title>
        <authorList>
            <person name="Tomsig J.L."/>
            <person name="Creutz C.E."/>
        </authorList>
    </citation>
    <scope>PARTIAL PROTEIN SEQUENCE</scope>
    <scope>SUBUNIT</scope>
    <scope>TISSUE SPECIFICITY</scope>
</reference>
<keyword id="KW-0007">Acetylation</keyword>
<keyword id="KW-0106">Calcium</keyword>
<keyword id="KW-1003">Cell membrane</keyword>
<keyword id="KW-0963">Cytoplasm</keyword>
<keyword id="KW-0221">Differentiation</keyword>
<keyword id="KW-0903">Direct protein sequencing</keyword>
<keyword id="KW-0472">Membrane</keyword>
<keyword id="KW-0479">Metal-binding</keyword>
<keyword id="KW-0539">Nucleus</keyword>
<keyword id="KW-1185">Reference proteome</keyword>
<keyword id="KW-0677">Repeat</keyword>
<keyword id="KW-0678">Repressor</keyword>
<keyword id="KW-0804">Transcription</keyword>
<keyword id="KW-0805">Transcription regulation</keyword>
<evidence type="ECO:0000250" key="1">
    <source>
        <dbReference type="UniProtKB" id="Q99829"/>
    </source>
</evidence>
<evidence type="ECO:0000255" key="2">
    <source>
        <dbReference type="PROSITE-ProRule" id="PRU00041"/>
    </source>
</evidence>
<evidence type="ECO:0000255" key="3">
    <source>
        <dbReference type="PROSITE-ProRule" id="PRU00219"/>
    </source>
</evidence>
<evidence type="ECO:0000269" key="4">
    <source>
    </source>
</evidence>
<evidence type="ECO:0000305" key="5"/>
<evidence type="ECO:0000312" key="6">
    <source>
        <dbReference type="EMBL" id="AAI23846.1"/>
    </source>
</evidence>
<comment type="function">
    <text evidence="1">Calcium-dependent phospholipid-binding protein that plays a role in calcium-mediated intracellular processes. Involved in the TNF-alpha receptor signaling pathway in a calcium-dependent manner. Exhibits calcium-dependent phospholipid binding properties. Plays a role in neuronal progenitor cell differentiation; induces neurite outgrowth via a AKT-dependent signaling cascade and calcium-independent manner. May recruit target proteins to the cell membrane in a calcium-dependent manner. May function in membrane trafficking. Involved in TNF-alpha-induced NF-kappa-B transcriptional repression by inducing endoprotease processing of the transcription factor NF-kappa-B p65/RELA subunit. Also induces endoprotease processing of NF-kappa-B p50/NFKB1, p52/NFKB2, RELB and REL.</text>
</comment>
<comment type="cofactor">
    <cofactor evidence="2">
        <name>Ca(2+)</name>
        <dbReference type="ChEBI" id="CHEBI:29108"/>
    </cofactor>
</comment>
<comment type="subunit">
    <text evidence="1">Homodimer; homodimerizes via its C2 domains. Interacts with p65/RELA (via N-terminus); this interaction induces proteolytic cleavage of p65/RELA subunit and inhibition of NF-kappa-B transcriptional activity. Interacts (via VWFA domain) with ACTB, CCDC22, MYCBP2, PPP5C, RDX and UBE2O.</text>
</comment>
<comment type="subcellular location">
    <subcellularLocation>
        <location evidence="1">Nucleus</location>
    </subcellularLocation>
    <subcellularLocation>
        <location evidence="1">Cytoplasm</location>
    </subcellularLocation>
    <subcellularLocation>
        <location evidence="1">Cell membrane</location>
    </subcellularLocation>
    <text evidence="1">Translocates to the cell membrane in a calcium-dependent manner.</text>
</comment>
<comment type="tissue specificity">
    <text evidence="4">Expressed in liver, spleen, muscle, testis, adrenal (at protein level) (PubMed:11123945).</text>
</comment>
<comment type="domain">
    <text evidence="1">C2 domains are necessary for calcium-dependent cell membrane association. C2 domains are necessary for neuronal progenitor cell differentiation in a calcium-independent manner.</text>
</comment>
<comment type="similarity">
    <text evidence="5">Belongs to the copine family.</text>
</comment>
<protein>
    <recommendedName>
        <fullName evidence="5">Copine-1</fullName>
    </recommendedName>
    <alternativeName>
        <fullName evidence="1">Copine I</fullName>
    </alternativeName>
</protein>
<sequence>MAHCVTLVQLSVSCDHLIDKDIGSKSDPLCVLLQDVGGGNWTELGRTERVQNCSSPEFSKTLQLEYHFETVQKLRFGIYDIDNKTPELGDDDFLGGAECSLGQIVSSRMLTLPLMLKPGKPAGRGTITVSAQELKDNRVVTMEVEARNLDKKDFLGKSDPFLEFFRQGDGKWHLAYRSEVIKNNLNPTWKRFSVPLQHFCGGDASTPIQVRCSDYDSDGSHDLIGTFHTSLAQLQAAPAEFECIHPEKQQKKKSYKNSGTICVKMCQVETEHSFLDYVMGGCQINFTVGVDFTGSNGDPSSPDSLHYLSPTGVNEYLTALWSVGSVVQDYDSDKLFPAFGFGAQVPPDWQVSHEFALNFNPSNPFCAGIQGIVDAYRQALPQVRLFGPTNFAPIINHVARFAAQAANQRNASQYFVLLLLTDGAVTDVEATREAVVRASYLPMSVIIVGVGCADFEAMEQLDADGGPLHTRSGEAAARDIVQFVPYRRFQNAPREALAQTVLAEVPTQLVSYFRAQGWAPFKPPPPAAKGPAQAPQA</sequence>
<dbReference type="EMBL" id="DAAA02036525">
    <property type="status" value="NOT_ANNOTATED_CDS"/>
    <property type="molecule type" value="Genomic_DNA"/>
</dbReference>
<dbReference type="EMBL" id="BC123845">
    <property type="protein sequence ID" value="AAI23846.1"/>
    <property type="molecule type" value="mRNA"/>
</dbReference>
<dbReference type="RefSeq" id="NP_001070408.1">
    <property type="nucleotide sequence ID" value="NM_001076940.1"/>
</dbReference>
<dbReference type="SMR" id="Q08DB4"/>
<dbReference type="FunCoup" id="Q08DB4">
    <property type="interactions" value="2465"/>
</dbReference>
<dbReference type="STRING" id="9913.ENSBTAP00000009138"/>
<dbReference type="PaxDb" id="9913-ENSBTAP00000009138"/>
<dbReference type="GeneID" id="615677"/>
<dbReference type="KEGG" id="bta:615677"/>
<dbReference type="CTD" id="8904"/>
<dbReference type="VEuPathDB" id="HostDB:ENSBTAG00000006955"/>
<dbReference type="eggNOG" id="KOG1327">
    <property type="taxonomic scope" value="Eukaryota"/>
</dbReference>
<dbReference type="HOGENOM" id="CLU_020452_3_2_1"/>
<dbReference type="InParanoid" id="Q08DB4"/>
<dbReference type="OMA" id="SPTWITK"/>
<dbReference type="OrthoDB" id="5855668at2759"/>
<dbReference type="TreeFam" id="TF316419"/>
<dbReference type="Reactome" id="R-BTA-1483206">
    <property type="pathway name" value="Glycerophospholipid biosynthesis"/>
</dbReference>
<dbReference type="Reactome" id="R-BTA-6798695">
    <property type="pathway name" value="Neutrophil degranulation"/>
</dbReference>
<dbReference type="Proteomes" id="UP000009136">
    <property type="component" value="Chromosome 13"/>
</dbReference>
<dbReference type="Bgee" id="ENSBTAG00000006955">
    <property type="expression patterns" value="Expressed in blood and 107 other cell types or tissues"/>
</dbReference>
<dbReference type="GO" id="GO:0005737">
    <property type="term" value="C:cytoplasm"/>
    <property type="evidence" value="ECO:0007669"/>
    <property type="project" value="UniProtKB-SubCell"/>
</dbReference>
<dbReference type="GO" id="GO:0005634">
    <property type="term" value="C:nucleus"/>
    <property type="evidence" value="ECO:0007669"/>
    <property type="project" value="UniProtKB-SubCell"/>
</dbReference>
<dbReference type="GO" id="GO:0005886">
    <property type="term" value="C:plasma membrane"/>
    <property type="evidence" value="ECO:0000318"/>
    <property type="project" value="GO_Central"/>
</dbReference>
<dbReference type="GO" id="GO:0005544">
    <property type="term" value="F:calcium-dependent phospholipid binding"/>
    <property type="evidence" value="ECO:0000318"/>
    <property type="project" value="GO_Central"/>
</dbReference>
<dbReference type="GO" id="GO:0046872">
    <property type="term" value="F:metal ion binding"/>
    <property type="evidence" value="ECO:0007669"/>
    <property type="project" value="UniProtKB-KW"/>
</dbReference>
<dbReference type="GO" id="GO:0030154">
    <property type="term" value="P:cell differentiation"/>
    <property type="evidence" value="ECO:0007669"/>
    <property type="project" value="UniProtKB-KW"/>
</dbReference>
<dbReference type="GO" id="GO:0071277">
    <property type="term" value="P:cellular response to calcium ion"/>
    <property type="evidence" value="ECO:0000318"/>
    <property type="project" value="GO_Central"/>
</dbReference>
<dbReference type="GO" id="GO:1903265">
    <property type="term" value="P:positive regulation of tumor necrosis factor-mediated signaling pathway"/>
    <property type="evidence" value="ECO:0000318"/>
    <property type="project" value="GO_Central"/>
</dbReference>
<dbReference type="GO" id="GO:0043122">
    <property type="term" value="P:regulation of canonical NF-kappaB signal transduction"/>
    <property type="evidence" value="ECO:0000318"/>
    <property type="project" value="GO_Central"/>
</dbReference>
<dbReference type="CDD" id="cd04048">
    <property type="entry name" value="C2A_Copine"/>
    <property type="match status" value="1"/>
</dbReference>
<dbReference type="CDD" id="cd04047">
    <property type="entry name" value="C2B_Copine"/>
    <property type="match status" value="1"/>
</dbReference>
<dbReference type="CDD" id="cd01459">
    <property type="entry name" value="vWA_copine_like"/>
    <property type="match status" value="1"/>
</dbReference>
<dbReference type="FunFam" id="2.60.40.150:FF:000079">
    <property type="entry name" value="copine-1 isoform X2"/>
    <property type="match status" value="1"/>
</dbReference>
<dbReference type="FunFam" id="2.60.40.150:FF:000097">
    <property type="entry name" value="copine-1 isoform X2"/>
    <property type="match status" value="1"/>
</dbReference>
<dbReference type="Gene3D" id="2.60.40.150">
    <property type="entry name" value="C2 domain"/>
    <property type="match status" value="2"/>
</dbReference>
<dbReference type="InterPro" id="IPR000008">
    <property type="entry name" value="C2_dom"/>
</dbReference>
<dbReference type="InterPro" id="IPR035892">
    <property type="entry name" value="C2_domain_sf"/>
</dbReference>
<dbReference type="InterPro" id="IPR037768">
    <property type="entry name" value="C2B_Copine"/>
</dbReference>
<dbReference type="InterPro" id="IPR045052">
    <property type="entry name" value="Copine"/>
</dbReference>
<dbReference type="InterPro" id="IPR010734">
    <property type="entry name" value="Copine_C"/>
</dbReference>
<dbReference type="InterPro" id="IPR002035">
    <property type="entry name" value="VWF_A"/>
</dbReference>
<dbReference type="InterPro" id="IPR036465">
    <property type="entry name" value="vWFA_dom_sf"/>
</dbReference>
<dbReference type="PANTHER" id="PTHR10857">
    <property type="entry name" value="COPINE"/>
    <property type="match status" value="1"/>
</dbReference>
<dbReference type="PANTHER" id="PTHR10857:SF2">
    <property type="entry name" value="COPINE-1"/>
    <property type="match status" value="1"/>
</dbReference>
<dbReference type="Pfam" id="PF00168">
    <property type="entry name" value="C2"/>
    <property type="match status" value="2"/>
</dbReference>
<dbReference type="Pfam" id="PF07002">
    <property type="entry name" value="Copine"/>
    <property type="match status" value="1"/>
</dbReference>
<dbReference type="SMART" id="SM00239">
    <property type="entry name" value="C2"/>
    <property type="match status" value="2"/>
</dbReference>
<dbReference type="SMART" id="SM00327">
    <property type="entry name" value="VWA"/>
    <property type="match status" value="1"/>
</dbReference>
<dbReference type="SUPFAM" id="SSF49562">
    <property type="entry name" value="C2 domain (Calcium/lipid-binding domain, CaLB)"/>
    <property type="match status" value="2"/>
</dbReference>
<dbReference type="SUPFAM" id="SSF53300">
    <property type="entry name" value="vWA-like"/>
    <property type="match status" value="1"/>
</dbReference>
<dbReference type="PROSITE" id="PS50004">
    <property type="entry name" value="C2"/>
    <property type="match status" value="2"/>
</dbReference>
<organism>
    <name type="scientific">Bos taurus</name>
    <name type="common">Bovine</name>
    <dbReference type="NCBI Taxonomy" id="9913"/>
    <lineage>
        <taxon>Eukaryota</taxon>
        <taxon>Metazoa</taxon>
        <taxon>Chordata</taxon>
        <taxon>Craniata</taxon>
        <taxon>Vertebrata</taxon>
        <taxon>Euteleostomi</taxon>
        <taxon>Mammalia</taxon>
        <taxon>Eutheria</taxon>
        <taxon>Laurasiatheria</taxon>
        <taxon>Artiodactyla</taxon>
        <taxon>Ruminantia</taxon>
        <taxon>Pecora</taxon>
        <taxon>Bovidae</taxon>
        <taxon>Bovinae</taxon>
        <taxon>Bos</taxon>
    </lineage>
</organism>
<name>CPNE1_BOVIN</name>
<proteinExistence type="evidence at protein level"/>
<accession>Q08DB4</accession>